<dbReference type="EMBL" id="AB018434">
    <property type="protein sequence ID" value="BAA84108.1"/>
    <property type="molecule type" value="Genomic_DNA"/>
</dbReference>
<dbReference type="EMBL" id="AP006878">
    <property type="protein sequence ID" value="BAD84230.1"/>
    <property type="molecule type" value="Genomic_DNA"/>
</dbReference>
<dbReference type="RefSeq" id="WP_011248996.1">
    <property type="nucleotide sequence ID" value="NC_006624.1"/>
</dbReference>
<dbReference type="SMR" id="Q9V2W8"/>
<dbReference type="STRING" id="69014.TK0041"/>
<dbReference type="EnsemblBacteria" id="BAD84230">
    <property type="protein sequence ID" value="BAD84230"/>
    <property type="gene ID" value="TK0041"/>
</dbReference>
<dbReference type="GeneID" id="78446543"/>
<dbReference type="KEGG" id="tko:TK0041"/>
<dbReference type="PATRIC" id="fig|69014.16.peg.41"/>
<dbReference type="eggNOG" id="arCOG01829">
    <property type="taxonomic scope" value="Archaea"/>
</dbReference>
<dbReference type="HOGENOM" id="CLU_051124_0_1_2"/>
<dbReference type="InParanoid" id="Q9V2W8"/>
<dbReference type="OrthoDB" id="102632at2157"/>
<dbReference type="PhylomeDB" id="Q9V2W8"/>
<dbReference type="Proteomes" id="UP000000536">
    <property type="component" value="Chromosome"/>
</dbReference>
<dbReference type="GO" id="GO:0097589">
    <property type="term" value="C:archaeal-type flagellum"/>
    <property type="evidence" value="ECO:0007669"/>
    <property type="project" value="UniProtKB-SubCell"/>
</dbReference>
<dbReference type="GO" id="GO:0005198">
    <property type="term" value="F:structural molecule activity"/>
    <property type="evidence" value="ECO:0007669"/>
    <property type="project" value="InterPro"/>
</dbReference>
<dbReference type="GO" id="GO:0097588">
    <property type="term" value="P:archaeal or bacterial-type flagellum-dependent cell motility"/>
    <property type="evidence" value="ECO:0007669"/>
    <property type="project" value="InterPro"/>
</dbReference>
<dbReference type="InterPro" id="IPR013373">
    <property type="entry name" value="Flagellin/pilin_N_arc"/>
</dbReference>
<dbReference type="InterPro" id="IPR002774">
    <property type="entry name" value="Flagellin_arc"/>
</dbReference>
<dbReference type="NCBIfam" id="TIGR02537">
    <property type="entry name" value="arch_flag_Nterm"/>
    <property type="match status" value="1"/>
</dbReference>
<dbReference type="NCBIfam" id="NF006325">
    <property type="entry name" value="PRK08541.1"/>
    <property type="match status" value="1"/>
</dbReference>
<dbReference type="PANTHER" id="PTHR35903">
    <property type="entry name" value="FLAGELLIN B1"/>
    <property type="match status" value="1"/>
</dbReference>
<dbReference type="PANTHER" id="PTHR35903:SF1">
    <property type="entry name" value="FLAGELLIN B1"/>
    <property type="match status" value="1"/>
</dbReference>
<dbReference type="Pfam" id="PF01917">
    <property type="entry name" value="Arch_flagellin"/>
    <property type="match status" value="1"/>
</dbReference>
<protein>
    <recommendedName>
        <fullName>Flagellin B4</fullName>
    </recommendedName>
</protein>
<organism>
    <name type="scientific">Thermococcus kodakarensis (strain ATCC BAA-918 / JCM 12380 / KOD1)</name>
    <name type="common">Pyrococcus kodakaraensis (strain KOD1)</name>
    <dbReference type="NCBI Taxonomy" id="69014"/>
    <lineage>
        <taxon>Archaea</taxon>
        <taxon>Methanobacteriati</taxon>
        <taxon>Methanobacteriota</taxon>
        <taxon>Thermococci</taxon>
        <taxon>Thermococcales</taxon>
        <taxon>Thermococcaceae</taxon>
        <taxon>Thermococcus</taxon>
    </lineage>
</organism>
<proteinExistence type="inferred from homology"/>
<gene>
    <name type="primary">flaB4</name>
    <name type="ordered locus">TK0041</name>
</gene>
<keyword id="KW-0974">Archaeal flagellum</keyword>
<keyword id="KW-1185">Reference proteome</keyword>
<sequence length="219" mass="23292">MRRRGAIGIGTLIVFIAMVLVAAVAAGVIIGTAGYLEQKAQAAGRQTTQEVASGIKVLNVYGYTNATPPSNGTIERMAIFITPNAGSEGIDLSNVKIVLSDGRRLVVYNYSGSFQNAESVKDLFNMTYVGVWNSTNGTASFGIAVINDIGSEMQGTHPTLEFGDMVALCVWTTMFEYEDKDGIGPSTRITGKVIPERGAAGVLDFTTPATFSYNVMVLQ</sequence>
<feature type="propeptide" id="PRO_0000009415" evidence="1">
    <location>
        <begin position="1"/>
        <end position="5"/>
    </location>
</feature>
<feature type="chain" id="PRO_0000009416" description="Flagellin B4">
    <location>
        <begin position="6"/>
        <end position="219"/>
    </location>
</feature>
<reference key="1">
    <citation type="journal article" date="1999" name="FEMS Microbiol. Lett.">
        <title>Sequence and transcriptional studies of five clustered flagellin genes from hyperthermophilic archaeon Pyrococcus kodakaraensis KOD1.</title>
        <authorList>
            <person name="Nagahisa K."/>
            <person name="Ezaki S."/>
            <person name="Fujiwara S."/>
            <person name="Imanaka T."/>
            <person name="Takagi M."/>
        </authorList>
    </citation>
    <scope>NUCLEOTIDE SEQUENCE [GENOMIC DNA]</scope>
    <source>
        <strain>ATCC BAA-918 / JCM 12380 / KOD1</strain>
    </source>
</reference>
<reference key="2">
    <citation type="journal article" date="2005" name="Genome Res.">
        <title>Complete genome sequence of the hyperthermophilic archaeon Thermococcus kodakaraensis KOD1 and comparison with Pyrococcus genomes.</title>
        <authorList>
            <person name="Fukui T."/>
            <person name="Atomi H."/>
            <person name="Kanai T."/>
            <person name="Matsumi R."/>
            <person name="Fujiwara S."/>
            <person name="Imanaka T."/>
        </authorList>
    </citation>
    <scope>NUCLEOTIDE SEQUENCE [LARGE SCALE GENOMIC DNA]</scope>
    <source>
        <strain>ATCC BAA-918 / JCM 12380 / KOD1</strain>
    </source>
</reference>
<accession>Q9V2W8</accession>
<evidence type="ECO:0000250" key="1"/>
<evidence type="ECO:0000305" key="2"/>
<comment type="function">
    <text>Flagellin is the subunit protein which polymerizes to form the filaments of archaeal flagella.</text>
</comment>
<comment type="subcellular location">
    <subcellularLocation>
        <location>Archaeal flagellum</location>
    </subcellularLocation>
</comment>
<comment type="similarity">
    <text evidence="2">Belongs to the archaeal flagellin family.</text>
</comment>
<name>FLAB4_THEKO</name>